<name>P2_RDVO</name>
<feature type="chain" id="PRO_0000222780" description="Minor outer capsid protein P2">
    <location>
        <begin position="1"/>
        <end position="1148"/>
    </location>
</feature>
<feature type="domain" description="PPPDE" evidence="2">
    <location>
        <begin position="929"/>
        <end position="1148"/>
    </location>
</feature>
<feature type="active site" evidence="2">
    <location>
        <position position="953"/>
    </location>
</feature>
<feature type="active site" evidence="2">
    <location>
        <position position="1111"/>
    </location>
</feature>
<comment type="function">
    <text evidence="1 3">Minor capsid protein present in the outer capsid, which is required for adsorption of the virus onto host insect cells (Potential). Could play a role in the host plant virus induced dwarfism (By similarity).</text>
</comment>
<comment type="subunit">
    <text evidence="1">Interacts with host ent-kaurene oxidases OSKO1, OSKO2, OSKOL4 and OSKOL5; this interaction.</text>
</comment>
<comment type="subcellular location">
    <subcellularLocation>
        <location evidence="3">Virion</location>
    </subcellularLocation>
    <subcellularLocation>
        <location evidence="1">Host cytoplasm</location>
    </subcellularLocation>
    <text evidence="1">Found in the peripheral regions of spherical cytoplasmic structures, called virus factories, that appear early after infection and are the site of viral replication and packaging.</text>
</comment>
<comment type="similarity">
    <text evidence="3">Belongs to the phytoreovirus minor outer capsid protein P2 family.</text>
</comment>
<keyword id="KW-0167">Capsid protein</keyword>
<keyword id="KW-1035">Host cytoplasm</keyword>
<keyword id="KW-0945">Host-virus interaction</keyword>
<keyword id="KW-1152">Outer capsid protein</keyword>
<keyword id="KW-0946">Virion</keyword>
<sequence>MAYPNDVRNVWDVYNVFRDVPNREHLIRDIRNGLVTVRNLTNMLTNMERDDQLIIAQLSNMMKSLSIGVEKAQNELSKLKTTDADRAAVLAAYQTSVLNIERNTMLLTGYFKQLVLDLTGYVGASVYPILPFMITGDQSMMVDSVKVNMKNVFDDKHEQEIVLPIHPACFVSTITEDTSSVVYADGDELYSVHVRHATMTMYVNVLGETVETRQLSMIGESIVPDDFAPSLLILRFSQDSVGEVFYLSHGNMKKFLGYSLEYTDKCSIFDVARRVSTTRNTIPNGFCSVDGVPYLDGRFIYQPSGVSADSNICAIYNSYVLDTLRYITECEVDTLRSVYDQTSSTSFSKTDVLTSSLLTMQSNISALSAATPQLANDVITFDSTDLLSLGTVLTVSNEFTADDTILSTSLAGHCQVDYSEGSPQDKSMSISVSCDSSQLVSSTVHSYSADILGHGLKGDRTMNLMINVPGLMNPQKVTVDYVYSDGYKLNFASVVAPGAPFWINATLQLSVSPSAHNMLSKLTPLDNDACPGLKAQANTPILVSMTINLDDATPALGGEVIQNCVFKIHHGDDVYSFVTDFDVVSYTSTSGTNCLKLISSVDITSQLPSDMVIYVMNGSPDAAFTSGDSVNMSSVDWHQSTSQTVGNYVYTTMKAYWNVTSYDVEARPYTTYVPGKVNFTAVEHADVFVDDYNTGVNSYVIVNSRIYYKGTPLYIEVPSGSFIKVSYFTSPLKNPTVDTYNAEISRNSAYLIKANASLDSVATMLNNISNRIDAMERLMEPTRAQQIAGVVSSIGGVISLGMPLLGAIVVTIGTIISIADPDKQGIDYHSVANAFMSWCQYAAVCRYEYGLLKRGDEKLDVLSFMPKRVVSDFKNKPDVISLPELGESVLRGSSTDYLDTGINIIYNDMQLLGQGKLSGWLNKTVSKVENNAANFFERNLVKSLANKEVLPMHARVEITQTEKIGDVYRTTILYTGINEGSYLGGDVFASRLGDKNILRMNGFESGPGRFKAIVESTTEVGNFRVVDWTVSGMSRYEIYAAAGEIYPSKDPSHADVQLLYESIVRDLTTRDGSFVLKHHDVLLLPGQLDAFEELIIRNASNYQYAFIGSNCQNYAHDVVDILTKFKRPQRWIKDDDFKLYIQSIYDAL</sequence>
<accession>O55519</accession>
<reference key="1">
    <citation type="journal article" date="1997" name="J. Virol.">
        <title>The loss of outer capsid protein P2 results in nontransmissibility by the insect vector of rice dwarf phytoreovirus.</title>
        <authorList>
            <person name="Tomaru M."/>
            <person name="Maruyama W."/>
            <person name="Kikuchi A."/>
            <person name="Yan J."/>
            <person name="Zhu Y."/>
            <person name="Suzuki N."/>
            <person name="Isogai M."/>
            <person name="Oguma Y."/>
            <person name="Kimura I."/>
            <person name="Omura T."/>
        </authorList>
    </citation>
    <scope>NUCLEOTIDE SEQUENCE [GENOMIC RNA]</scope>
</reference>
<protein>
    <recommendedName>
        <fullName>Minor outer capsid protein P2</fullName>
    </recommendedName>
</protein>
<evidence type="ECO:0000250" key="1"/>
<evidence type="ECO:0000255" key="2">
    <source>
        <dbReference type="PROSITE-ProRule" id="PRU01205"/>
    </source>
</evidence>
<evidence type="ECO:0000305" key="3"/>
<organism>
    <name type="scientific">Rice dwarf virus (isolate O)</name>
    <name type="common">RDV</name>
    <dbReference type="NCBI Taxonomy" id="142805"/>
    <lineage>
        <taxon>Viruses</taxon>
        <taxon>Riboviria</taxon>
        <taxon>Orthornavirae</taxon>
        <taxon>Duplornaviricota</taxon>
        <taxon>Resentoviricetes</taxon>
        <taxon>Reovirales</taxon>
        <taxon>Sedoreoviridae</taxon>
        <taxon>Phytoreovirus</taxon>
        <taxon>Rice dwarf virus</taxon>
    </lineage>
</organism>
<proteinExistence type="inferred from homology"/>
<dbReference type="EMBL" id="AB001579">
    <property type="protein sequence ID" value="BAA24138.1"/>
    <property type="molecule type" value="Genomic_RNA"/>
</dbReference>
<dbReference type="GO" id="GO:0030430">
    <property type="term" value="C:host cell cytoplasm"/>
    <property type="evidence" value="ECO:0007669"/>
    <property type="project" value="UniProtKB-SubCell"/>
</dbReference>
<dbReference type="GO" id="GO:0039624">
    <property type="term" value="C:viral outer capsid"/>
    <property type="evidence" value="ECO:0007669"/>
    <property type="project" value="UniProtKB-KW"/>
</dbReference>
<dbReference type="GO" id="GO:0008233">
    <property type="term" value="F:peptidase activity"/>
    <property type="evidence" value="ECO:0007669"/>
    <property type="project" value="InterPro"/>
</dbReference>
<dbReference type="InterPro" id="IPR008580">
    <property type="entry name" value="PPPDE_dom"/>
</dbReference>
<dbReference type="Pfam" id="PF05903">
    <property type="entry name" value="Peptidase_C97"/>
    <property type="match status" value="1"/>
</dbReference>
<dbReference type="PROSITE" id="PS51858">
    <property type="entry name" value="PPPDE"/>
    <property type="match status" value="1"/>
</dbReference>
<organismHost>
    <name type="scientific">Alopecurus aequalis</name>
    <dbReference type="NCBI Taxonomy" id="114194"/>
</organismHost>
<organismHost>
    <name type="scientific">Echinochloa crus-galli</name>
    <name type="common">Barnyard grass</name>
    <name type="synonym">Panicum crus-galli</name>
    <dbReference type="NCBI Taxonomy" id="90397"/>
</organismHost>
<organismHost>
    <name type="scientific">Nephotettix cincticeps</name>
    <name type="common">Green rice leafhopper</name>
    <name type="synonym">Selenocephalus cincticeps</name>
    <dbReference type="NCBI Taxonomy" id="94400"/>
</organismHost>
<organismHost>
    <name type="scientific">Oryza sativa</name>
    <name type="common">Rice</name>
    <dbReference type="NCBI Taxonomy" id="4530"/>
</organismHost>
<organismHost>
    <name type="scientific">Paspalum</name>
    <dbReference type="NCBI Taxonomy" id="147271"/>
</organismHost>